<sequence length="153" mass="17250">MSEKYVVTWDMLQIHARQLAQRLLPVEQWTGIIAVSRGGLVPAALLARELGIRHVDTVCISSYDHDHQRDLKILKKAEGDGEGFIVVDDLVDTGGTAKVIREMYPKAHFVTIFAKPEGRPLVDDFVVDIPQNTWIEQPWDMGVMFVPPVCDKK</sequence>
<organism>
    <name type="scientific">Proteus mirabilis (strain HI4320)</name>
    <dbReference type="NCBI Taxonomy" id="529507"/>
    <lineage>
        <taxon>Bacteria</taxon>
        <taxon>Pseudomonadati</taxon>
        <taxon>Pseudomonadota</taxon>
        <taxon>Gammaproteobacteria</taxon>
        <taxon>Enterobacterales</taxon>
        <taxon>Morganellaceae</taxon>
        <taxon>Proteus</taxon>
    </lineage>
</organism>
<dbReference type="EC" id="2.4.2.-" evidence="1"/>
<dbReference type="EC" id="2.4.2.22" evidence="1"/>
<dbReference type="EMBL" id="AM942759">
    <property type="protein sequence ID" value="CAR40941.1"/>
    <property type="molecule type" value="Genomic_DNA"/>
</dbReference>
<dbReference type="RefSeq" id="WP_004244790.1">
    <property type="nucleotide sequence ID" value="NC_010554.1"/>
</dbReference>
<dbReference type="SMR" id="B4EUU7"/>
<dbReference type="EnsemblBacteria" id="CAR40941">
    <property type="protein sequence ID" value="CAR40941"/>
    <property type="gene ID" value="PMI0366"/>
</dbReference>
<dbReference type="GeneID" id="6800562"/>
<dbReference type="KEGG" id="pmr:PMI0366"/>
<dbReference type="eggNOG" id="COG2236">
    <property type="taxonomic scope" value="Bacteria"/>
</dbReference>
<dbReference type="HOGENOM" id="CLU_080904_3_0_6"/>
<dbReference type="UniPathway" id="UPA00602">
    <property type="reaction ID" value="UER00658"/>
</dbReference>
<dbReference type="UniPathway" id="UPA00909">
    <property type="reaction ID" value="UER00887"/>
</dbReference>
<dbReference type="Proteomes" id="UP000008319">
    <property type="component" value="Chromosome"/>
</dbReference>
<dbReference type="GO" id="GO:0005829">
    <property type="term" value="C:cytosol"/>
    <property type="evidence" value="ECO:0007669"/>
    <property type="project" value="TreeGrafter"/>
</dbReference>
<dbReference type="GO" id="GO:0005886">
    <property type="term" value="C:plasma membrane"/>
    <property type="evidence" value="ECO:0007669"/>
    <property type="project" value="UniProtKB-SubCell"/>
</dbReference>
<dbReference type="GO" id="GO:0052657">
    <property type="term" value="F:guanine phosphoribosyltransferase activity"/>
    <property type="evidence" value="ECO:0007669"/>
    <property type="project" value="RHEA"/>
</dbReference>
<dbReference type="GO" id="GO:0004422">
    <property type="term" value="F:hypoxanthine phosphoribosyltransferase activity"/>
    <property type="evidence" value="ECO:0007669"/>
    <property type="project" value="TreeGrafter"/>
</dbReference>
<dbReference type="GO" id="GO:0000287">
    <property type="term" value="F:magnesium ion binding"/>
    <property type="evidence" value="ECO:0007669"/>
    <property type="project" value="UniProtKB-UniRule"/>
</dbReference>
<dbReference type="GO" id="GO:0000310">
    <property type="term" value="F:xanthine phosphoribosyltransferase activity"/>
    <property type="evidence" value="ECO:0007669"/>
    <property type="project" value="UniProtKB-UniRule"/>
</dbReference>
<dbReference type="GO" id="GO:0032263">
    <property type="term" value="P:GMP salvage"/>
    <property type="evidence" value="ECO:0007669"/>
    <property type="project" value="UniProtKB-UniRule"/>
</dbReference>
<dbReference type="GO" id="GO:0032264">
    <property type="term" value="P:IMP salvage"/>
    <property type="evidence" value="ECO:0007669"/>
    <property type="project" value="TreeGrafter"/>
</dbReference>
<dbReference type="GO" id="GO:0006166">
    <property type="term" value="P:purine ribonucleoside salvage"/>
    <property type="evidence" value="ECO:0007669"/>
    <property type="project" value="UniProtKB-KW"/>
</dbReference>
<dbReference type="GO" id="GO:0032265">
    <property type="term" value="P:XMP salvage"/>
    <property type="evidence" value="ECO:0007669"/>
    <property type="project" value="UniProtKB-UniRule"/>
</dbReference>
<dbReference type="CDD" id="cd06223">
    <property type="entry name" value="PRTases_typeI"/>
    <property type="match status" value="1"/>
</dbReference>
<dbReference type="FunFam" id="3.40.50.2020:FF:000009">
    <property type="entry name" value="Xanthine phosphoribosyltransferase"/>
    <property type="match status" value="1"/>
</dbReference>
<dbReference type="Gene3D" id="3.40.50.2020">
    <property type="match status" value="1"/>
</dbReference>
<dbReference type="HAMAP" id="MF_01903">
    <property type="entry name" value="XGPRT"/>
    <property type="match status" value="1"/>
</dbReference>
<dbReference type="InterPro" id="IPR000836">
    <property type="entry name" value="PRibTrfase_dom"/>
</dbReference>
<dbReference type="InterPro" id="IPR029057">
    <property type="entry name" value="PRTase-like"/>
</dbReference>
<dbReference type="InterPro" id="IPR023747">
    <property type="entry name" value="Xanthine_Guanine_PRibTrfase"/>
</dbReference>
<dbReference type="NCBIfam" id="NF006613">
    <property type="entry name" value="PRK09177.1"/>
    <property type="match status" value="1"/>
</dbReference>
<dbReference type="PANTHER" id="PTHR39563">
    <property type="entry name" value="XANTHINE PHOSPHORIBOSYLTRANSFERASE"/>
    <property type="match status" value="1"/>
</dbReference>
<dbReference type="PANTHER" id="PTHR39563:SF1">
    <property type="entry name" value="XANTHINE-GUANINE PHOSPHORIBOSYLTRANSFERASE"/>
    <property type="match status" value="1"/>
</dbReference>
<dbReference type="Pfam" id="PF00156">
    <property type="entry name" value="Pribosyltran"/>
    <property type="match status" value="1"/>
</dbReference>
<dbReference type="SUPFAM" id="SSF53271">
    <property type="entry name" value="PRTase-like"/>
    <property type="match status" value="1"/>
</dbReference>
<dbReference type="PROSITE" id="PS00103">
    <property type="entry name" value="PUR_PYR_PR_TRANSFER"/>
    <property type="match status" value="1"/>
</dbReference>
<feature type="chain" id="PRO_1000188751" description="Xanthine-guanine phosphoribosyltransferase">
    <location>
        <begin position="1"/>
        <end position="153"/>
    </location>
</feature>
<feature type="binding site" evidence="1">
    <location>
        <begin position="37"/>
        <end position="38"/>
    </location>
    <ligand>
        <name>5-phospho-alpha-D-ribose 1-diphosphate</name>
        <dbReference type="ChEBI" id="CHEBI:58017"/>
    </ligand>
</feature>
<feature type="binding site" evidence="1">
    <location>
        <position position="69"/>
    </location>
    <ligand>
        <name>5-phospho-alpha-D-ribose 1-diphosphate</name>
        <dbReference type="ChEBI" id="CHEBI:58017"/>
    </ligand>
</feature>
<feature type="binding site" evidence="1">
    <location>
        <position position="69"/>
    </location>
    <ligand>
        <name>GMP</name>
        <dbReference type="ChEBI" id="CHEBI:58115"/>
    </ligand>
</feature>
<feature type="binding site" evidence="1">
    <location>
        <begin position="88"/>
        <end position="96"/>
    </location>
    <ligand>
        <name>5-phospho-alpha-D-ribose 1-diphosphate</name>
        <dbReference type="ChEBI" id="CHEBI:58017"/>
    </ligand>
</feature>
<feature type="binding site" evidence="1">
    <location>
        <position position="89"/>
    </location>
    <ligand>
        <name>Mg(2+)</name>
        <dbReference type="ChEBI" id="CHEBI:18420"/>
    </ligand>
</feature>
<feature type="binding site" evidence="1">
    <location>
        <begin position="92"/>
        <end position="96"/>
    </location>
    <ligand>
        <name>GMP</name>
        <dbReference type="ChEBI" id="CHEBI:58115"/>
    </ligand>
</feature>
<feature type="binding site" evidence="1">
    <location>
        <position position="92"/>
    </location>
    <ligand>
        <name>guanine</name>
        <dbReference type="ChEBI" id="CHEBI:16235"/>
    </ligand>
</feature>
<feature type="binding site" evidence="1">
    <location>
        <position position="92"/>
    </location>
    <ligand>
        <name>xanthine</name>
        <dbReference type="ChEBI" id="CHEBI:17712"/>
    </ligand>
</feature>
<feature type="binding site" evidence="1">
    <location>
        <begin position="134"/>
        <end position="135"/>
    </location>
    <ligand>
        <name>GMP</name>
        <dbReference type="ChEBI" id="CHEBI:58115"/>
    </ligand>
</feature>
<feature type="binding site" evidence="1">
    <location>
        <position position="135"/>
    </location>
    <ligand>
        <name>guanine</name>
        <dbReference type="ChEBI" id="CHEBI:16235"/>
    </ligand>
</feature>
<feature type="binding site" evidence="1">
    <location>
        <position position="135"/>
    </location>
    <ligand>
        <name>xanthine</name>
        <dbReference type="ChEBI" id="CHEBI:17712"/>
    </ligand>
</feature>
<accession>B4EUU7</accession>
<proteinExistence type="inferred from homology"/>
<comment type="function">
    <text evidence="1">Purine salvage pathway enzyme that catalyzes the transfer of the ribosyl-5-phosphate group from 5-phospho-alpha-D-ribose 1-diphosphate (PRPP) to the N9 position of the 6-oxopurines guanine and xanthine to form the corresponding ribonucleotides GMP (guanosine 5'-monophosphate) and XMP (xanthosine 5'-monophosphate), with the release of PPi. To a lesser extent, also acts on hypoxanthine.</text>
</comment>
<comment type="catalytic activity">
    <reaction evidence="1">
        <text>GMP + diphosphate = guanine + 5-phospho-alpha-D-ribose 1-diphosphate</text>
        <dbReference type="Rhea" id="RHEA:25424"/>
        <dbReference type="ChEBI" id="CHEBI:16235"/>
        <dbReference type="ChEBI" id="CHEBI:33019"/>
        <dbReference type="ChEBI" id="CHEBI:58017"/>
        <dbReference type="ChEBI" id="CHEBI:58115"/>
    </reaction>
    <physiologicalReaction direction="right-to-left" evidence="1">
        <dbReference type="Rhea" id="RHEA:25426"/>
    </physiologicalReaction>
</comment>
<comment type="catalytic activity">
    <reaction evidence="1">
        <text>XMP + diphosphate = xanthine + 5-phospho-alpha-D-ribose 1-diphosphate</text>
        <dbReference type="Rhea" id="RHEA:10800"/>
        <dbReference type="ChEBI" id="CHEBI:17712"/>
        <dbReference type="ChEBI" id="CHEBI:33019"/>
        <dbReference type="ChEBI" id="CHEBI:57464"/>
        <dbReference type="ChEBI" id="CHEBI:58017"/>
        <dbReference type="EC" id="2.4.2.22"/>
    </reaction>
    <physiologicalReaction direction="right-to-left" evidence="1">
        <dbReference type="Rhea" id="RHEA:10802"/>
    </physiologicalReaction>
</comment>
<comment type="catalytic activity">
    <reaction evidence="1">
        <text>IMP + diphosphate = hypoxanthine + 5-phospho-alpha-D-ribose 1-diphosphate</text>
        <dbReference type="Rhea" id="RHEA:17973"/>
        <dbReference type="ChEBI" id="CHEBI:17368"/>
        <dbReference type="ChEBI" id="CHEBI:33019"/>
        <dbReference type="ChEBI" id="CHEBI:58017"/>
        <dbReference type="ChEBI" id="CHEBI:58053"/>
    </reaction>
    <physiologicalReaction direction="right-to-left" evidence="1">
        <dbReference type="Rhea" id="RHEA:17975"/>
    </physiologicalReaction>
</comment>
<comment type="cofactor">
    <cofactor evidence="1">
        <name>Mg(2+)</name>
        <dbReference type="ChEBI" id="CHEBI:18420"/>
    </cofactor>
</comment>
<comment type="pathway">
    <text evidence="1">Purine metabolism; GMP biosynthesis via salvage pathway; GMP from guanine: step 1/1.</text>
</comment>
<comment type="pathway">
    <text evidence="1">Purine metabolism; XMP biosynthesis via salvage pathway; XMP from xanthine: step 1/1.</text>
</comment>
<comment type="subunit">
    <text evidence="1">Homotetramer.</text>
</comment>
<comment type="subcellular location">
    <subcellularLocation>
        <location evidence="1">Cell inner membrane</location>
        <topology evidence="1">Peripheral membrane protein</topology>
    </subcellularLocation>
</comment>
<comment type="similarity">
    <text evidence="1">Belongs to the purine/pyrimidine phosphoribosyltransferase family. XGPT subfamily.</text>
</comment>
<name>XGPT_PROMH</name>
<reference key="1">
    <citation type="journal article" date="2008" name="J. Bacteriol.">
        <title>Complete genome sequence of uropathogenic Proteus mirabilis, a master of both adherence and motility.</title>
        <authorList>
            <person name="Pearson M.M."/>
            <person name="Sebaihia M."/>
            <person name="Churcher C."/>
            <person name="Quail M.A."/>
            <person name="Seshasayee A.S."/>
            <person name="Luscombe N.M."/>
            <person name="Abdellah Z."/>
            <person name="Arrosmith C."/>
            <person name="Atkin B."/>
            <person name="Chillingworth T."/>
            <person name="Hauser H."/>
            <person name="Jagels K."/>
            <person name="Moule S."/>
            <person name="Mungall K."/>
            <person name="Norbertczak H."/>
            <person name="Rabbinowitsch E."/>
            <person name="Walker D."/>
            <person name="Whithead S."/>
            <person name="Thomson N.R."/>
            <person name="Rather P.N."/>
            <person name="Parkhill J."/>
            <person name="Mobley H.L.T."/>
        </authorList>
    </citation>
    <scope>NUCLEOTIDE SEQUENCE [LARGE SCALE GENOMIC DNA]</scope>
    <source>
        <strain>HI4320</strain>
    </source>
</reference>
<evidence type="ECO:0000255" key="1">
    <source>
        <dbReference type="HAMAP-Rule" id="MF_01903"/>
    </source>
</evidence>
<gene>
    <name evidence="1" type="primary">gpt</name>
    <name type="ordered locus">PMI0366</name>
</gene>
<keyword id="KW-0997">Cell inner membrane</keyword>
<keyword id="KW-1003">Cell membrane</keyword>
<keyword id="KW-0328">Glycosyltransferase</keyword>
<keyword id="KW-0460">Magnesium</keyword>
<keyword id="KW-0472">Membrane</keyword>
<keyword id="KW-0479">Metal-binding</keyword>
<keyword id="KW-0660">Purine salvage</keyword>
<keyword id="KW-1185">Reference proteome</keyword>
<keyword id="KW-0808">Transferase</keyword>
<protein>
    <recommendedName>
        <fullName evidence="1">Xanthine-guanine phosphoribosyltransferase</fullName>
        <shortName evidence="1">XGPRT</shortName>
        <ecNumber evidence="1">2.4.2.-</ecNumber>
        <ecNumber evidence="1">2.4.2.22</ecNumber>
    </recommendedName>
    <alternativeName>
        <fullName evidence="1">Xanthine phosphoribosyltransferase</fullName>
    </alternativeName>
</protein>